<evidence type="ECO:0000255" key="1">
    <source>
        <dbReference type="HAMAP-Rule" id="MF_01108"/>
    </source>
</evidence>
<reference key="1">
    <citation type="submission" date="2009-03" db="EMBL/GenBank/DDBJ databases">
        <title>Complete genome sequence of Edwardsiella ictaluri 93-146.</title>
        <authorList>
            <person name="Williams M.L."/>
            <person name="Gillaspy A.F."/>
            <person name="Dyer D.W."/>
            <person name="Thune R.L."/>
            <person name="Waldbieser G.C."/>
            <person name="Schuster S.C."/>
            <person name="Gipson J."/>
            <person name="Zaitshik J."/>
            <person name="Landry C."/>
            <person name="Lawrence M.L."/>
        </authorList>
    </citation>
    <scope>NUCLEOTIDE SEQUENCE [LARGE SCALE GENOMIC DNA]</scope>
    <source>
        <strain>93-146</strain>
    </source>
</reference>
<dbReference type="EC" id="3.5.1.16" evidence="1"/>
<dbReference type="EMBL" id="CP001600">
    <property type="protein sequence ID" value="ACR70968.1"/>
    <property type="molecule type" value="Genomic_DNA"/>
</dbReference>
<dbReference type="RefSeq" id="WP_015872999.1">
    <property type="nucleotide sequence ID" value="NZ_CP169062.1"/>
</dbReference>
<dbReference type="SMR" id="C5BC62"/>
<dbReference type="STRING" id="67780.B6E78_10805"/>
<dbReference type="GeneID" id="69540672"/>
<dbReference type="KEGG" id="eic:NT01EI_3849"/>
<dbReference type="PATRIC" id="fig|634503.3.peg.3434"/>
<dbReference type="HOGENOM" id="CLU_021802_2_4_6"/>
<dbReference type="OrthoDB" id="3665926at2"/>
<dbReference type="UniPathway" id="UPA00068">
    <property type="reaction ID" value="UER00110"/>
</dbReference>
<dbReference type="Proteomes" id="UP000001485">
    <property type="component" value="Chromosome"/>
</dbReference>
<dbReference type="GO" id="GO:0005737">
    <property type="term" value="C:cytoplasm"/>
    <property type="evidence" value="ECO:0007669"/>
    <property type="project" value="UniProtKB-SubCell"/>
</dbReference>
<dbReference type="GO" id="GO:0008777">
    <property type="term" value="F:acetylornithine deacetylase activity"/>
    <property type="evidence" value="ECO:0007669"/>
    <property type="project" value="UniProtKB-UniRule"/>
</dbReference>
<dbReference type="GO" id="GO:0008270">
    <property type="term" value="F:zinc ion binding"/>
    <property type="evidence" value="ECO:0007669"/>
    <property type="project" value="UniProtKB-UniRule"/>
</dbReference>
<dbReference type="GO" id="GO:0006526">
    <property type="term" value="P:L-arginine biosynthetic process"/>
    <property type="evidence" value="ECO:0007669"/>
    <property type="project" value="UniProtKB-UniRule"/>
</dbReference>
<dbReference type="CDD" id="cd03894">
    <property type="entry name" value="M20_ArgE"/>
    <property type="match status" value="1"/>
</dbReference>
<dbReference type="FunFam" id="3.30.70.360:FF:000003">
    <property type="entry name" value="Acetylornithine deacetylase"/>
    <property type="match status" value="1"/>
</dbReference>
<dbReference type="Gene3D" id="3.30.70.360">
    <property type="match status" value="1"/>
</dbReference>
<dbReference type="Gene3D" id="3.40.630.10">
    <property type="entry name" value="Zn peptidases"/>
    <property type="match status" value="1"/>
</dbReference>
<dbReference type="HAMAP" id="MF_01108">
    <property type="entry name" value="ArgE"/>
    <property type="match status" value="1"/>
</dbReference>
<dbReference type="InterPro" id="IPR010169">
    <property type="entry name" value="AcOrn-deacetyl"/>
</dbReference>
<dbReference type="InterPro" id="IPR001261">
    <property type="entry name" value="ArgE/DapE_CS"/>
</dbReference>
<dbReference type="InterPro" id="IPR036264">
    <property type="entry name" value="Bact_exopeptidase_dim_dom"/>
</dbReference>
<dbReference type="InterPro" id="IPR002933">
    <property type="entry name" value="Peptidase_M20"/>
</dbReference>
<dbReference type="InterPro" id="IPR011650">
    <property type="entry name" value="Peptidase_M20_dimer"/>
</dbReference>
<dbReference type="InterPro" id="IPR050072">
    <property type="entry name" value="Peptidase_M20A"/>
</dbReference>
<dbReference type="NCBIfam" id="TIGR01892">
    <property type="entry name" value="AcOrn-deacetyl"/>
    <property type="match status" value="1"/>
</dbReference>
<dbReference type="NCBIfam" id="NF003474">
    <property type="entry name" value="PRK05111.1"/>
    <property type="match status" value="1"/>
</dbReference>
<dbReference type="PANTHER" id="PTHR43808">
    <property type="entry name" value="ACETYLORNITHINE DEACETYLASE"/>
    <property type="match status" value="1"/>
</dbReference>
<dbReference type="PANTHER" id="PTHR43808:SF1">
    <property type="entry name" value="ACETYLORNITHINE DEACETYLASE"/>
    <property type="match status" value="1"/>
</dbReference>
<dbReference type="Pfam" id="PF07687">
    <property type="entry name" value="M20_dimer"/>
    <property type="match status" value="1"/>
</dbReference>
<dbReference type="Pfam" id="PF01546">
    <property type="entry name" value="Peptidase_M20"/>
    <property type="match status" value="1"/>
</dbReference>
<dbReference type="SUPFAM" id="SSF55031">
    <property type="entry name" value="Bacterial exopeptidase dimerisation domain"/>
    <property type="match status" value="1"/>
</dbReference>
<dbReference type="SUPFAM" id="SSF53187">
    <property type="entry name" value="Zn-dependent exopeptidases"/>
    <property type="match status" value="1"/>
</dbReference>
<dbReference type="PROSITE" id="PS00758">
    <property type="entry name" value="ARGE_DAPE_CPG2_1"/>
    <property type="match status" value="1"/>
</dbReference>
<dbReference type="PROSITE" id="PS00759">
    <property type="entry name" value="ARGE_DAPE_CPG2_2"/>
    <property type="match status" value="1"/>
</dbReference>
<accession>C5BC62</accession>
<gene>
    <name evidence="1" type="primary">argE</name>
    <name type="ordered locus">NT01EI_3849</name>
</gene>
<name>ARGE_EDWI9</name>
<feature type="chain" id="PRO_1000213562" description="Acetylornithine deacetylase">
    <location>
        <begin position="1"/>
        <end position="383"/>
    </location>
</feature>
<feature type="active site" evidence="1">
    <location>
        <position position="82"/>
    </location>
</feature>
<feature type="active site" evidence="1">
    <location>
        <position position="144"/>
    </location>
</feature>
<feature type="binding site" evidence="1">
    <location>
        <position position="80"/>
    </location>
    <ligand>
        <name>Zn(2+)</name>
        <dbReference type="ChEBI" id="CHEBI:29105"/>
        <label>1</label>
    </ligand>
</feature>
<feature type="binding site" evidence="1">
    <location>
        <position position="112"/>
    </location>
    <ligand>
        <name>Zn(2+)</name>
        <dbReference type="ChEBI" id="CHEBI:29105"/>
        <label>1</label>
    </ligand>
</feature>
<feature type="binding site" evidence="1">
    <location>
        <position position="112"/>
    </location>
    <ligand>
        <name>Zn(2+)</name>
        <dbReference type="ChEBI" id="CHEBI:29105"/>
        <label>2</label>
    </ligand>
</feature>
<feature type="binding site" evidence="1">
    <location>
        <position position="145"/>
    </location>
    <ligand>
        <name>Zn(2+)</name>
        <dbReference type="ChEBI" id="CHEBI:29105"/>
        <label>2</label>
    </ligand>
</feature>
<feature type="binding site" evidence="1">
    <location>
        <position position="169"/>
    </location>
    <ligand>
        <name>Zn(2+)</name>
        <dbReference type="ChEBI" id="CHEBI:29105"/>
        <label>1</label>
    </ligand>
</feature>
<feature type="binding site" evidence="1">
    <location>
        <position position="355"/>
    </location>
    <ligand>
        <name>Zn(2+)</name>
        <dbReference type="ChEBI" id="CHEBI:29105"/>
        <label>2</label>
    </ligand>
</feature>
<sequence>MNTQLPSFIALYRALIATPSISANDGALDQSNERLITLLAGWLSDLGLRVEMQPVPNTRNKFNLLANYGEGAGGLMLAGHTDTVPFDEGRWTRDPFTLSEQDNRLYGLGTADMKGLFAFIIDTLRDIELHKLNKPLYILATADEETSMAGARYFAASTALRPDCCIIGEPTSLKPIRAHKGHLSEAIRITGQSGHSSDPARGVNAIEIMHNAIGHLLTLRNTLQQRYHNPAFNIPYPTMNLGHIHGGDAANRICACCELHLDMRPLPGMTLNDLNELLNQALTPIAAQWSGRLRIEHLHPPIPGYECPRHAPLVQAIEQLLGERAEAVNYCTEAPFLQEVCPTLVLGPGSIEQAHQPDEYLSTDFIVPTRTLLTQLIHHFCQR</sequence>
<comment type="function">
    <text evidence="1">Catalyzes the hydrolysis of the amide bond of N(2)-acetylated L-amino acids. Cleaves the acetyl group from N-acetyl-L-ornithine to form L-ornithine, an intermediate in L-arginine biosynthesis pathway, and a branchpoint in the synthesis of polyamines.</text>
</comment>
<comment type="catalytic activity">
    <reaction evidence="1">
        <text>N(2)-acetyl-L-ornithine + H2O = L-ornithine + acetate</text>
        <dbReference type="Rhea" id="RHEA:15941"/>
        <dbReference type="ChEBI" id="CHEBI:15377"/>
        <dbReference type="ChEBI" id="CHEBI:30089"/>
        <dbReference type="ChEBI" id="CHEBI:46911"/>
        <dbReference type="ChEBI" id="CHEBI:57805"/>
        <dbReference type="EC" id="3.5.1.16"/>
    </reaction>
</comment>
<comment type="cofactor">
    <cofactor evidence="1">
        <name>Zn(2+)</name>
        <dbReference type="ChEBI" id="CHEBI:29105"/>
    </cofactor>
    <cofactor evidence="1">
        <name>Co(2+)</name>
        <dbReference type="ChEBI" id="CHEBI:48828"/>
    </cofactor>
    <text evidence="1">Binds 2 Zn(2+) or Co(2+) ions per subunit.</text>
</comment>
<comment type="cofactor">
    <cofactor evidence="1">
        <name>glutathione</name>
        <dbReference type="ChEBI" id="CHEBI:57925"/>
    </cofactor>
</comment>
<comment type="pathway">
    <text evidence="1">Amino-acid biosynthesis; L-arginine biosynthesis; L-ornithine from N(2)-acetyl-L-ornithine (linear): step 1/1.</text>
</comment>
<comment type="subunit">
    <text evidence="1">Homodimer.</text>
</comment>
<comment type="subcellular location">
    <subcellularLocation>
        <location evidence="1">Cytoplasm</location>
    </subcellularLocation>
</comment>
<comment type="similarity">
    <text evidence="1">Belongs to the peptidase M20A family. ArgE subfamily.</text>
</comment>
<protein>
    <recommendedName>
        <fullName evidence="1">Acetylornithine deacetylase</fullName>
        <shortName evidence="1">AO</shortName>
        <shortName evidence="1">Acetylornithinase</shortName>
        <ecNumber evidence="1">3.5.1.16</ecNumber>
    </recommendedName>
    <alternativeName>
        <fullName evidence="1">N-acetylornithinase</fullName>
        <shortName evidence="1">NAO</shortName>
    </alternativeName>
</protein>
<keyword id="KW-0028">Amino-acid biosynthesis</keyword>
<keyword id="KW-0055">Arginine biosynthesis</keyword>
<keyword id="KW-0170">Cobalt</keyword>
<keyword id="KW-0963">Cytoplasm</keyword>
<keyword id="KW-0378">Hydrolase</keyword>
<keyword id="KW-0479">Metal-binding</keyword>
<keyword id="KW-0862">Zinc</keyword>
<proteinExistence type="inferred from homology"/>
<organism>
    <name type="scientific">Edwardsiella ictaluri (strain 93-146)</name>
    <dbReference type="NCBI Taxonomy" id="634503"/>
    <lineage>
        <taxon>Bacteria</taxon>
        <taxon>Pseudomonadati</taxon>
        <taxon>Pseudomonadota</taxon>
        <taxon>Gammaproteobacteria</taxon>
        <taxon>Enterobacterales</taxon>
        <taxon>Hafniaceae</taxon>
        <taxon>Edwardsiella</taxon>
    </lineage>
</organism>